<accession>P0DF59</accession>
<accession>Q8K847</accession>
<name>ADCA_STRPQ</name>
<dbReference type="EMBL" id="BA000034">
    <property type="protein sequence ID" value="BAC64484.1"/>
    <property type="molecule type" value="Genomic_DNA"/>
</dbReference>
<dbReference type="RefSeq" id="WP_011054319.1">
    <property type="nucleotide sequence ID" value="NC_004606.1"/>
</dbReference>
<dbReference type="SMR" id="P0DF59"/>
<dbReference type="KEGG" id="sps:SPs1389"/>
<dbReference type="HOGENOM" id="CLU_016838_7_1_9"/>
<dbReference type="GO" id="GO:0008270">
    <property type="term" value="F:zinc ion binding"/>
    <property type="evidence" value="ECO:0007669"/>
    <property type="project" value="InterPro"/>
</dbReference>
<dbReference type="GO" id="GO:0007155">
    <property type="term" value="P:cell adhesion"/>
    <property type="evidence" value="ECO:0007669"/>
    <property type="project" value="InterPro"/>
</dbReference>
<dbReference type="GO" id="GO:0006829">
    <property type="term" value="P:zinc ion transport"/>
    <property type="evidence" value="ECO:0007669"/>
    <property type="project" value="UniProtKB-KW"/>
</dbReference>
<dbReference type="CDD" id="cd01017">
    <property type="entry name" value="AdcA"/>
    <property type="match status" value="1"/>
</dbReference>
<dbReference type="Gene3D" id="2.40.128.20">
    <property type="match status" value="1"/>
</dbReference>
<dbReference type="Gene3D" id="3.40.50.1980">
    <property type="entry name" value="Nitrogenase molybdenum iron protein domain"/>
    <property type="match status" value="2"/>
</dbReference>
<dbReference type="InterPro" id="IPR006129">
    <property type="entry name" value="AdhesinB"/>
</dbReference>
<dbReference type="InterPro" id="IPR050492">
    <property type="entry name" value="Bact_metal-bind_prot9"/>
</dbReference>
<dbReference type="InterPro" id="IPR012674">
    <property type="entry name" value="Calycin"/>
</dbReference>
<dbReference type="InterPro" id="IPR006128">
    <property type="entry name" value="Lipoprotein_PsaA-like"/>
</dbReference>
<dbReference type="InterPro" id="IPR015304">
    <property type="entry name" value="ZinT_dom"/>
</dbReference>
<dbReference type="InterPro" id="IPR006127">
    <property type="entry name" value="ZnuA-like"/>
</dbReference>
<dbReference type="PANTHER" id="PTHR42953:SF3">
    <property type="entry name" value="HIGH-AFFINITY ZINC UPTAKE SYSTEM PROTEIN ZNUA"/>
    <property type="match status" value="1"/>
</dbReference>
<dbReference type="PANTHER" id="PTHR42953">
    <property type="entry name" value="HIGH-AFFINITY ZINC UPTAKE SYSTEM PROTEIN ZNUA-RELATED"/>
    <property type="match status" value="1"/>
</dbReference>
<dbReference type="Pfam" id="PF09223">
    <property type="entry name" value="ZinT"/>
    <property type="match status" value="1"/>
</dbReference>
<dbReference type="Pfam" id="PF01297">
    <property type="entry name" value="ZnuA"/>
    <property type="match status" value="1"/>
</dbReference>
<dbReference type="PRINTS" id="PR00691">
    <property type="entry name" value="ADHESINB"/>
</dbReference>
<dbReference type="PRINTS" id="PR00690">
    <property type="entry name" value="ADHESNFAMILY"/>
</dbReference>
<dbReference type="SUPFAM" id="SSF53807">
    <property type="entry name" value="Helical backbone' metal receptor"/>
    <property type="match status" value="1"/>
</dbReference>
<dbReference type="SUPFAM" id="SSF50814">
    <property type="entry name" value="Lipocalins"/>
    <property type="match status" value="1"/>
</dbReference>
<organism>
    <name type="scientific">Streptococcus pyogenes serotype M3 (strain SSI-1)</name>
    <dbReference type="NCBI Taxonomy" id="193567"/>
    <lineage>
        <taxon>Bacteria</taxon>
        <taxon>Bacillati</taxon>
        <taxon>Bacillota</taxon>
        <taxon>Bacilli</taxon>
        <taxon>Lactobacillales</taxon>
        <taxon>Streptococcaceae</taxon>
        <taxon>Streptococcus</taxon>
    </lineage>
</organism>
<protein>
    <recommendedName>
        <fullName>Zinc-binding protein AdcA</fullName>
    </recommendedName>
</protein>
<gene>
    <name type="primary">adcA</name>
    <name type="ordered locus">SPs1389</name>
</gene>
<reference key="1">
    <citation type="journal article" date="2003" name="Genome Res.">
        <title>Genome sequence of an M3 strain of Streptococcus pyogenes reveals a large-scale genomic rearrangement in invasive strains and new insights into phage evolution.</title>
        <authorList>
            <person name="Nakagawa I."/>
            <person name="Kurokawa K."/>
            <person name="Yamashita A."/>
            <person name="Nakata M."/>
            <person name="Tomiyasu Y."/>
            <person name="Okahashi N."/>
            <person name="Kawabata S."/>
            <person name="Yamazaki K."/>
            <person name="Shiba T."/>
            <person name="Yasunaga T."/>
            <person name="Hayashi H."/>
            <person name="Hattori M."/>
            <person name="Hamada S."/>
        </authorList>
    </citation>
    <scope>NUCLEOTIDE SEQUENCE [LARGE SCALE GENOMIC DNA]</scope>
    <source>
        <strain>SSI-1</strain>
    </source>
</reference>
<feature type="signal peptide" evidence="2">
    <location>
        <begin position="1"/>
        <end position="28"/>
    </location>
</feature>
<feature type="chain" id="PRO_0000411569" description="Zinc-binding protein AdcA">
    <location>
        <begin position="29"/>
        <end position="515"/>
    </location>
</feature>
<feature type="region of interest" description="Disordered" evidence="3">
    <location>
        <begin position="126"/>
        <end position="148"/>
    </location>
</feature>
<feature type="region of interest" description="His-rich loop" evidence="1">
    <location>
        <begin position="129"/>
        <end position="148"/>
    </location>
</feature>
<feature type="binding site" evidence="1">
    <location>
        <position position="66"/>
    </location>
    <ligand>
        <name>Zn(2+)</name>
        <dbReference type="ChEBI" id="CHEBI:29105"/>
    </ligand>
</feature>
<feature type="binding site" evidence="1">
    <location>
        <position position="152"/>
    </location>
    <ligand>
        <name>Zn(2+)</name>
        <dbReference type="ChEBI" id="CHEBI:29105"/>
    </ligand>
</feature>
<feature type="binding site" evidence="1">
    <location>
        <position position="216"/>
    </location>
    <ligand>
        <name>Zn(2+)</name>
        <dbReference type="ChEBI" id="CHEBI:29105"/>
    </ligand>
</feature>
<feature type="binding site" evidence="1">
    <location>
        <position position="291"/>
    </location>
    <ligand>
        <name>Zn(2+)</name>
        <dbReference type="ChEBI" id="CHEBI:29105"/>
    </ligand>
</feature>
<keyword id="KW-0406">Ion transport</keyword>
<keyword id="KW-0479">Metal-binding</keyword>
<keyword id="KW-0732">Signal</keyword>
<keyword id="KW-0813">Transport</keyword>
<keyword id="KW-0862">Zinc</keyword>
<keyword id="KW-0864">Zinc transport</keyword>
<sequence>MKKKILLMMSLISVFFAWQLTQAKQVLAEGKVKVVTTFYPVYEFTKGIVGNDGDVSMLMKAGTEPHDFEPSTKDIKKIQDADAFVYMDDNMETWVSDVKKSLTSKKVTIVKGTGNMLLVAGVGHDHHHEEADKKHEHNKHSEEGHNHAFDPHVWLSPYRSITVVENIRDSLSKAYPEKAENFKANAATYIEKLKELDKDYTAALSDAKQKSFVTQHAAFGYMALDYGLNQISINGVIPDAEPSAKRIATLSKYVKKYGIKYIYFEENASSKVAKTLAKEAGVKAAVLSPLEGLTEKEMKAGQDYFTVMRKNLETLRLTTDVAGKEILPEKDTTKTVYNGYFKDKEVKDRQLSDWSGSWQSVYPYLQDGTLDQVWDYKAKKSKGKMTAAEYKDYYTTGYKTDVEQIKINGKKKTMTFVRNGEKKTFTYTYAGKEILTYPKGNRGVRFMFEAKEPNAGEFKYVQFSDHAIAPEKAEHFHLYWGGDSQEKLHKELEHWPTYYGSDLSGREIAQEINAH</sequence>
<comment type="function">
    <text evidence="1">Part of the ATP-binding cassette (ABC) transport system AdcABC involved in zinc import (By similarity). Binds zinc with high affinity and specificity and delivers it to the membrane permease for translocation into the cytoplasm (By similarity).</text>
</comment>
<comment type="domain">
    <text evidence="1">The His-rich loop facilitates the closure of the zinc binding site and is required for zinc acquisition.</text>
</comment>
<comment type="similarity">
    <text evidence="4">Belongs to the bacterial solute-binding protein 9 family.</text>
</comment>
<proteinExistence type="inferred from homology"/>
<evidence type="ECO:0000250" key="1">
    <source>
        <dbReference type="UniProtKB" id="Q8CWN2"/>
    </source>
</evidence>
<evidence type="ECO:0000255" key="2"/>
<evidence type="ECO:0000256" key="3">
    <source>
        <dbReference type="SAM" id="MobiDB-lite"/>
    </source>
</evidence>
<evidence type="ECO:0000305" key="4"/>